<reference key="1">
    <citation type="journal article" date="2007" name="Proc. Natl. Acad. Sci. U.S.A.">
        <title>Genomic and metabolic adaptations of Methanobrevibacter smithii to the human gut.</title>
        <authorList>
            <person name="Samuel B.S."/>
            <person name="Hansen E.E."/>
            <person name="Manchester J.K."/>
            <person name="Coutinho P.M."/>
            <person name="Henrissat B."/>
            <person name="Fulton R."/>
            <person name="Latreille P."/>
            <person name="Kim K."/>
            <person name="Wilson R.K."/>
            <person name="Gordon J.I."/>
        </authorList>
    </citation>
    <scope>NUCLEOTIDE SEQUENCE [LARGE SCALE GENOMIC DNA]</scope>
    <source>
        <strain>ATCC 35061 / DSM 861 / OCM 144 / PS</strain>
    </source>
</reference>
<sequence length="239" mass="27143">MDYVKGIFKNRPNRFIAEVEVDGKIEIAHVPNTGRCKELLVDGAAVYLKPSDNPKRKTRFTLHFVVNKGELVSLYSQEANSIVYDAILDGKIKELQGYSYHQREKQVDDSRIDIYLANQEDDCCGMEFLVDSCYIEVKGVTLIVDGEARFPDAPTERGAKHLKELIKLKNDGNRAVVFFLIQHPAGNDFRPNWENDPKFSQTLVEAENAGVEILVYKCNNTLEGIELVPKSLDYDLSRK</sequence>
<gene>
    <name evidence="1" type="primary">sfsA</name>
    <name type="ordered locus">Msm_1090</name>
</gene>
<organism>
    <name type="scientific">Methanobrevibacter smithii (strain ATCC 35061 / DSM 861 / OCM 144 / PS)</name>
    <dbReference type="NCBI Taxonomy" id="420247"/>
    <lineage>
        <taxon>Archaea</taxon>
        <taxon>Methanobacteriati</taxon>
        <taxon>Methanobacteriota</taxon>
        <taxon>Methanomada group</taxon>
        <taxon>Methanobacteria</taxon>
        <taxon>Methanobacteriales</taxon>
        <taxon>Methanobacteriaceae</taxon>
        <taxon>Methanobrevibacter</taxon>
    </lineage>
</organism>
<comment type="similarity">
    <text evidence="1">Belongs to the SfsA family.</text>
</comment>
<evidence type="ECO:0000255" key="1">
    <source>
        <dbReference type="HAMAP-Rule" id="MF_00095"/>
    </source>
</evidence>
<dbReference type="EMBL" id="CP000678">
    <property type="protein sequence ID" value="ABQ87295.1"/>
    <property type="molecule type" value="Genomic_DNA"/>
</dbReference>
<dbReference type="RefSeq" id="WP_011954283.1">
    <property type="nucleotide sequence ID" value="NC_009515.1"/>
</dbReference>
<dbReference type="SMR" id="A5UM67"/>
<dbReference type="STRING" id="420247.Msm_1090"/>
<dbReference type="EnsemblBacteria" id="ABQ87295">
    <property type="protein sequence ID" value="ABQ87295"/>
    <property type="gene ID" value="Msm_1090"/>
</dbReference>
<dbReference type="GeneID" id="78817729"/>
<dbReference type="KEGG" id="msi:Msm_1090"/>
<dbReference type="PATRIC" id="fig|420247.28.peg.1089"/>
<dbReference type="eggNOG" id="arCOG04115">
    <property type="taxonomic scope" value="Archaea"/>
</dbReference>
<dbReference type="HOGENOM" id="CLU_052299_1_0_2"/>
<dbReference type="Proteomes" id="UP000001992">
    <property type="component" value="Chromosome"/>
</dbReference>
<dbReference type="GO" id="GO:0003677">
    <property type="term" value="F:DNA binding"/>
    <property type="evidence" value="ECO:0007669"/>
    <property type="project" value="InterPro"/>
</dbReference>
<dbReference type="CDD" id="cd22359">
    <property type="entry name" value="SfsA-like_bacterial"/>
    <property type="match status" value="1"/>
</dbReference>
<dbReference type="Gene3D" id="2.40.50.580">
    <property type="match status" value="1"/>
</dbReference>
<dbReference type="Gene3D" id="3.40.1350.60">
    <property type="match status" value="1"/>
</dbReference>
<dbReference type="HAMAP" id="MF_00095">
    <property type="entry name" value="SfsA"/>
    <property type="match status" value="1"/>
</dbReference>
<dbReference type="InterPro" id="IPR005224">
    <property type="entry name" value="SfsA"/>
</dbReference>
<dbReference type="InterPro" id="IPR040452">
    <property type="entry name" value="SfsA_C"/>
</dbReference>
<dbReference type="InterPro" id="IPR041465">
    <property type="entry name" value="SfsA_N"/>
</dbReference>
<dbReference type="NCBIfam" id="TIGR00230">
    <property type="entry name" value="sfsA"/>
    <property type="match status" value="1"/>
</dbReference>
<dbReference type="PANTHER" id="PTHR30545">
    <property type="entry name" value="SUGAR FERMENTATION STIMULATION PROTEIN A"/>
    <property type="match status" value="1"/>
</dbReference>
<dbReference type="PANTHER" id="PTHR30545:SF2">
    <property type="entry name" value="SUGAR FERMENTATION STIMULATION PROTEIN A"/>
    <property type="match status" value="1"/>
</dbReference>
<dbReference type="Pfam" id="PF03749">
    <property type="entry name" value="SfsA"/>
    <property type="match status" value="1"/>
</dbReference>
<dbReference type="Pfam" id="PF17746">
    <property type="entry name" value="SfsA_N"/>
    <property type="match status" value="1"/>
</dbReference>
<name>SFSA_METS3</name>
<accession>A5UM67</accession>
<protein>
    <recommendedName>
        <fullName evidence="1">Sugar fermentation stimulation protein homolog</fullName>
    </recommendedName>
</protein>
<feature type="chain" id="PRO_0000340168" description="Sugar fermentation stimulation protein homolog">
    <location>
        <begin position="1"/>
        <end position="239"/>
    </location>
</feature>
<proteinExistence type="inferred from homology"/>